<gene>
    <name evidence="22" type="primary">CAPN1</name>
    <name type="synonym">CANPL1</name>
    <name evidence="21" type="ORF">PIG30</name>
</gene>
<keyword id="KW-0002">3D-structure</keyword>
<keyword id="KW-0007">Acetylation</keyword>
<keyword id="KW-0068">Autocatalytic cleavage</keyword>
<keyword id="KW-0106">Calcium</keyword>
<keyword id="KW-1003">Cell membrane</keyword>
<keyword id="KW-0963">Cytoplasm</keyword>
<keyword id="KW-0225">Disease variant</keyword>
<keyword id="KW-0890">Hereditary spastic paraplegia</keyword>
<keyword id="KW-0378">Hydrolase</keyword>
<keyword id="KW-0472">Membrane</keyword>
<keyword id="KW-0479">Metal-binding</keyword>
<keyword id="KW-0523">Neurodegeneration</keyword>
<keyword id="KW-0597">Phosphoprotein</keyword>
<keyword id="KW-0645">Protease</keyword>
<keyword id="KW-1267">Proteomics identification</keyword>
<keyword id="KW-1185">Reference proteome</keyword>
<keyword id="KW-0677">Repeat</keyword>
<keyword id="KW-0788">Thiol protease</keyword>
<organism>
    <name type="scientific">Homo sapiens</name>
    <name type="common">Human</name>
    <dbReference type="NCBI Taxonomy" id="9606"/>
    <lineage>
        <taxon>Eukaryota</taxon>
        <taxon>Metazoa</taxon>
        <taxon>Chordata</taxon>
        <taxon>Craniata</taxon>
        <taxon>Vertebrata</taxon>
        <taxon>Euteleostomi</taxon>
        <taxon>Mammalia</taxon>
        <taxon>Eutheria</taxon>
        <taxon>Euarchontoglires</taxon>
        <taxon>Primates</taxon>
        <taxon>Haplorrhini</taxon>
        <taxon>Catarrhini</taxon>
        <taxon>Hominidae</taxon>
        <taxon>Homo</taxon>
    </lineage>
</organism>
<dbReference type="EC" id="3.4.22.52" evidence="7 8"/>
<dbReference type="EMBL" id="X04366">
    <property type="protein sequence ID" value="CAA27881.1"/>
    <property type="molecule type" value="mRNA"/>
</dbReference>
<dbReference type="EMBL" id="AY550975">
    <property type="protein sequence ID" value="AAT52221.1"/>
    <property type="molecule type" value="mRNA"/>
</dbReference>
<dbReference type="EMBL" id="AY796340">
    <property type="protein sequence ID" value="AAV41878.1"/>
    <property type="molecule type" value="Genomic_DNA"/>
</dbReference>
<dbReference type="EMBL" id="BC008751">
    <property type="protein sequence ID" value="AAH08751.1"/>
    <property type="molecule type" value="mRNA"/>
</dbReference>
<dbReference type="EMBL" id="BC017200">
    <property type="protein sequence ID" value="AAH17200.1"/>
    <property type="molecule type" value="mRNA"/>
</dbReference>
<dbReference type="EMBL" id="BC075862">
    <property type="protein sequence ID" value="AAH75862.1"/>
    <property type="molecule type" value="mRNA"/>
</dbReference>
<dbReference type="CCDS" id="CCDS44644.1"/>
<dbReference type="PIR" id="A26213">
    <property type="entry name" value="CIHUH"/>
</dbReference>
<dbReference type="RefSeq" id="NP_001185797.1">
    <property type="nucleotide sequence ID" value="NM_001198868.2"/>
</dbReference>
<dbReference type="RefSeq" id="NP_001185798.1">
    <property type="nucleotide sequence ID" value="NM_001198869.2"/>
</dbReference>
<dbReference type="RefSeq" id="NP_005177.2">
    <property type="nucleotide sequence ID" value="NM_005186.3"/>
</dbReference>
<dbReference type="RefSeq" id="XP_006718761.1">
    <property type="nucleotide sequence ID" value="XM_006718698.3"/>
</dbReference>
<dbReference type="RefSeq" id="XP_011543594.1">
    <property type="nucleotide sequence ID" value="XM_011545292.2"/>
</dbReference>
<dbReference type="PDB" id="1ZCM">
    <property type="method" value="X-ray"/>
    <property type="resolution" value="2.00 A"/>
    <property type="chains" value="A=33-353"/>
</dbReference>
<dbReference type="PDB" id="2ARY">
    <property type="method" value="X-ray"/>
    <property type="resolution" value="2.40 A"/>
    <property type="chains" value="A/B=29-360"/>
</dbReference>
<dbReference type="PDB" id="7W7O">
    <property type="method" value="X-ray"/>
    <property type="resolution" value="1.59 A"/>
    <property type="chains" value="A=27-360"/>
</dbReference>
<dbReference type="PDB" id="7X79">
    <property type="method" value="X-ray"/>
    <property type="resolution" value="1.80 A"/>
    <property type="chains" value="A=1-714"/>
</dbReference>
<dbReference type="PDB" id="8GX3">
    <property type="method" value="X-ray"/>
    <property type="resolution" value="1.99 A"/>
    <property type="chains" value="A=1-714"/>
</dbReference>
<dbReference type="PDBsum" id="1ZCM"/>
<dbReference type="PDBsum" id="2ARY"/>
<dbReference type="PDBsum" id="7W7O"/>
<dbReference type="PDBsum" id="7X79"/>
<dbReference type="PDBsum" id="8GX3"/>
<dbReference type="SMR" id="P07384"/>
<dbReference type="BioGRID" id="107273">
    <property type="interactions" value="196"/>
</dbReference>
<dbReference type="ComplexPortal" id="CPX-4302">
    <property type="entry name" value="mu-Calpain complex"/>
</dbReference>
<dbReference type="CORUM" id="P07384"/>
<dbReference type="FunCoup" id="P07384">
    <property type="interactions" value="1159"/>
</dbReference>
<dbReference type="IntAct" id="P07384">
    <property type="interactions" value="72"/>
</dbReference>
<dbReference type="MINT" id="P07384"/>
<dbReference type="STRING" id="9606.ENSP00000431984"/>
<dbReference type="BindingDB" id="P07384"/>
<dbReference type="ChEMBL" id="CHEMBL3891"/>
<dbReference type="DrugBank" id="DB07627">
    <property type="generic name" value="(2S)-4-METHYL-2-(3-PHENYLTHIOUREIDO)-N-((3S)-TETRAHYDRO-2-HYDROXY-3-FURANYL)PENTANAMIDE"/>
</dbReference>
<dbReference type="DrugBank" id="DB04276">
    <property type="generic name" value="4-[[(2S)-2-[[(2S)-3-Carboxy-2-hydroxypropanoyl]amino]-4-methylpentanoyl]amino]butyl-(diaminomethylidene)azanium"/>
</dbReference>
<dbReference type="DrugBank" id="DB04653">
    <property type="generic name" value="N-[(benzyloxy)carbonyl]-L-leucyl-N-[(1S)-3-fluoro-1-(4-hydroxybenzyl)-2-oxopropyl]-L-leucinamide"/>
</dbReference>
<dbReference type="DrugBank" id="DB11117">
    <property type="generic name" value="Undecylenic acid"/>
</dbReference>
<dbReference type="GuidetoPHARMACOLOGY" id="2336"/>
<dbReference type="MEROPS" id="C02.001"/>
<dbReference type="GlyGen" id="P07384">
    <property type="glycosylation" value="2 sites, 1 N-linked glycan (1 site), 1 O-linked glycan (1 site)"/>
</dbReference>
<dbReference type="iPTMnet" id="P07384"/>
<dbReference type="MetOSite" id="P07384"/>
<dbReference type="PhosphoSitePlus" id="P07384"/>
<dbReference type="SwissPalm" id="P07384"/>
<dbReference type="BioMuta" id="CAPN1"/>
<dbReference type="DMDM" id="115574"/>
<dbReference type="CPTAC" id="CPTAC-35"/>
<dbReference type="CPTAC" id="CPTAC-36"/>
<dbReference type="jPOST" id="P07384"/>
<dbReference type="MassIVE" id="P07384"/>
<dbReference type="PaxDb" id="9606-ENSP00000431984"/>
<dbReference type="PeptideAtlas" id="P07384"/>
<dbReference type="PRIDE" id="P07384"/>
<dbReference type="ProteomicsDB" id="52001"/>
<dbReference type="Pumba" id="P07384"/>
<dbReference type="Antibodypedia" id="1034">
    <property type="antibodies" value="572 antibodies from 43 providers"/>
</dbReference>
<dbReference type="DNASU" id="823"/>
<dbReference type="Ensembl" id="ENST00000279247.11">
    <property type="protein sequence ID" value="ENSP00000279247.7"/>
    <property type="gene ID" value="ENSG00000014216.16"/>
</dbReference>
<dbReference type="Ensembl" id="ENST00000524773.5">
    <property type="protein sequence ID" value="ENSP00000434176.1"/>
    <property type="gene ID" value="ENSG00000014216.16"/>
</dbReference>
<dbReference type="Ensembl" id="ENST00000527323.5">
    <property type="protein sequence ID" value="ENSP00000431984.1"/>
    <property type="gene ID" value="ENSG00000014216.16"/>
</dbReference>
<dbReference type="Ensembl" id="ENST00000533129.5">
    <property type="protein sequence ID" value="ENSP00000431686.1"/>
    <property type="gene ID" value="ENSG00000014216.16"/>
</dbReference>
<dbReference type="Ensembl" id="ENST00000533820.5">
    <property type="protein sequence ID" value="ENSP00000435272.1"/>
    <property type="gene ID" value="ENSG00000014216.16"/>
</dbReference>
<dbReference type="GeneID" id="823"/>
<dbReference type="KEGG" id="hsa:823"/>
<dbReference type="MANE-Select" id="ENST00000279247.11">
    <property type="protein sequence ID" value="ENSP00000279247.7"/>
    <property type="RefSeq nucleotide sequence ID" value="NM_005186.4"/>
    <property type="RefSeq protein sequence ID" value="NP_005177.2"/>
</dbReference>
<dbReference type="UCSC" id="uc001odf.3">
    <property type="organism name" value="human"/>
</dbReference>
<dbReference type="AGR" id="HGNC:1476"/>
<dbReference type="CTD" id="823"/>
<dbReference type="DisGeNET" id="823"/>
<dbReference type="GeneCards" id="CAPN1"/>
<dbReference type="HGNC" id="HGNC:1476">
    <property type="gene designation" value="CAPN1"/>
</dbReference>
<dbReference type="HPA" id="ENSG00000014216">
    <property type="expression patterns" value="Tissue enhanced (esophagus)"/>
</dbReference>
<dbReference type="MalaCards" id="CAPN1"/>
<dbReference type="MIM" id="114220">
    <property type="type" value="gene"/>
</dbReference>
<dbReference type="MIM" id="616907">
    <property type="type" value="phenotype"/>
</dbReference>
<dbReference type="neXtProt" id="NX_P07384"/>
<dbReference type="OpenTargets" id="ENSG00000014216"/>
<dbReference type="Orphanet" id="488594">
    <property type="disease" value="Autosomal recessive spastic paraplegia type 76"/>
</dbReference>
<dbReference type="PharmGKB" id="PA26057"/>
<dbReference type="VEuPathDB" id="HostDB:ENSG00000014216"/>
<dbReference type="eggNOG" id="KOG0045">
    <property type="taxonomic scope" value="Eukaryota"/>
</dbReference>
<dbReference type="GeneTree" id="ENSGT00940000159147"/>
<dbReference type="HOGENOM" id="CLU_010982_0_1_1"/>
<dbReference type="InParanoid" id="P07384"/>
<dbReference type="OMA" id="NSKEWNG"/>
<dbReference type="OrthoDB" id="424753at2759"/>
<dbReference type="PAN-GO" id="P07384">
    <property type="GO annotations" value="3 GO annotations based on evolutionary models"/>
</dbReference>
<dbReference type="PhylomeDB" id="P07384"/>
<dbReference type="TreeFam" id="TF314748"/>
<dbReference type="BRENDA" id="3.4.22.52">
    <property type="organism ID" value="2681"/>
</dbReference>
<dbReference type="BRENDA" id="3.4.22.53">
    <property type="organism ID" value="2681"/>
</dbReference>
<dbReference type="PathwayCommons" id="P07384"/>
<dbReference type="Reactome" id="R-HSA-1474228">
    <property type="pathway name" value="Degradation of the extracellular matrix"/>
</dbReference>
<dbReference type="Reactome" id="R-HSA-6798695">
    <property type="pathway name" value="Neutrophil degranulation"/>
</dbReference>
<dbReference type="Reactome" id="R-HSA-6809371">
    <property type="pathway name" value="Formation of the cornified envelope"/>
</dbReference>
<dbReference type="Reactome" id="R-HSA-8862803">
    <property type="pathway name" value="Deregulated CDK5 triggers multiple neurodegenerative pathways in Alzheimer's disease models"/>
</dbReference>
<dbReference type="SignaLink" id="P07384"/>
<dbReference type="SIGNOR" id="P07384"/>
<dbReference type="BioGRID-ORCS" id="823">
    <property type="hits" value="14 hits in 1156 CRISPR screens"/>
</dbReference>
<dbReference type="CD-CODE" id="FB4E32DD">
    <property type="entry name" value="Presynaptic clusters and postsynaptic densities"/>
</dbReference>
<dbReference type="ChiTaRS" id="CAPN1">
    <property type="organism name" value="human"/>
</dbReference>
<dbReference type="EvolutionaryTrace" id="P07384"/>
<dbReference type="GeneWiki" id="CAPN1"/>
<dbReference type="GenomeRNAi" id="823"/>
<dbReference type="Pharos" id="P07384">
    <property type="development level" value="Tchem"/>
</dbReference>
<dbReference type="PRO" id="PR:P07384"/>
<dbReference type="Proteomes" id="UP000005640">
    <property type="component" value="Chromosome 11"/>
</dbReference>
<dbReference type="RNAct" id="P07384">
    <property type="molecule type" value="protein"/>
</dbReference>
<dbReference type="Bgee" id="ENSG00000014216">
    <property type="expression patterns" value="Expressed in lower esophagus mucosa and 178 other cell types or tissues"/>
</dbReference>
<dbReference type="ExpressionAtlas" id="P07384">
    <property type="expression patterns" value="baseline and differential"/>
</dbReference>
<dbReference type="GO" id="GO:0110158">
    <property type="term" value="C:calpain complex"/>
    <property type="evidence" value="ECO:0000250"/>
    <property type="project" value="ComplexPortal"/>
</dbReference>
<dbReference type="GO" id="GO:0001533">
    <property type="term" value="C:cornified envelope"/>
    <property type="evidence" value="ECO:0007669"/>
    <property type="project" value="Ensembl"/>
</dbReference>
<dbReference type="GO" id="GO:0005737">
    <property type="term" value="C:cytoplasm"/>
    <property type="evidence" value="ECO:0000318"/>
    <property type="project" value="GO_Central"/>
</dbReference>
<dbReference type="GO" id="GO:0005829">
    <property type="term" value="C:cytosol"/>
    <property type="evidence" value="ECO:0000314"/>
    <property type="project" value="UniProtKB"/>
</dbReference>
<dbReference type="GO" id="GO:0070062">
    <property type="term" value="C:extracellular exosome"/>
    <property type="evidence" value="ECO:0007005"/>
    <property type="project" value="UniProtKB"/>
</dbReference>
<dbReference type="GO" id="GO:0005576">
    <property type="term" value="C:extracellular region"/>
    <property type="evidence" value="ECO:0000304"/>
    <property type="project" value="Reactome"/>
</dbReference>
<dbReference type="GO" id="GO:1904813">
    <property type="term" value="C:ficolin-1-rich granule lumen"/>
    <property type="evidence" value="ECO:0000304"/>
    <property type="project" value="Reactome"/>
</dbReference>
<dbReference type="GO" id="GO:0005925">
    <property type="term" value="C:focal adhesion"/>
    <property type="evidence" value="ECO:0007005"/>
    <property type="project" value="UniProtKB"/>
</dbReference>
<dbReference type="GO" id="GO:0005764">
    <property type="term" value="C:lysosome"/>
    <property type="evidence" value="ECO:0007669"/>
    <property type="project" value="Ensembl"/>
</dbReference>
<dbReference type="GO" id="GO:0016020">
    <property type="term" value="C:membrane"/>
    <property type="evidence" value="ECO:0000314"/>
    <property type="project" value="BHF-UCL"/>
</dbReference>
<dbReference type="GO" id="GO:0005739">
    <property type="term" value="C:mitochondrion"/>
    <property type="evidence" value="ECO:0007669"/>
    <property type="project" value="Ensembl"/>
</dbReference>
<dbReference type="GO" id="GO:0005886">
    <property type="term" value="C:plasma membrane"/>
    <property type="evidence" value="ECO:0000314"/>
    <property type="project" value="UniProtKB"/>
</dbReference>
<dbReference type="GO" id="GO:0005509">
    <property type="term" value="F:calcium ion binding"/>
    <property type="evidence" value="ECO:0000314"/>
    <property type="project" value="UniProtKB"/>
</dbReference>
<dbReference type="GO" id="GO:0004198">
    <property type="term" value="F:calcium-dependent cysteine-type endopeptidase activity"/>
    <property type="evidence" value="ECO:0000314"/>
    <property type="project" value="UniProtKB"/>
</dbReference>
<dbReference type="GO" id="GO:0008233">
    <property type="term" value="F:peptidase activity"/>
    <property type="evidence" value="ECO:0000314"/>
    <property type="project" value="UniProtKB"/>
</dbReference>
<dbReference type="GO" id="GO:0060056">
    <property type="term" value="P:mammary gland involution"/>
    <property type="evidence" value="ECO:0007669"/>
    <property type="project" value="Ensembl"/>
</dbReference>
<dbReference type="GO" id="GO:0098989">
    <property type="term" value="P:NMDA selective glutamate receptor signaling pathway"/>
    <property type="evidence" value="ECO:0000304"/>
    <property type="project" value="ARUK-UCL"/>
</dbReference>
<dbReference type="GO" id="GO:0008284">
    <property type="term" value="P:positive regulation of cell population proliferation"/>
    <property type="evidence" value="ECO:0000304"/>
    <property type="project" value="ProtInc"/>
</dbReference>
<dbReference type="GO" id="GO:0006508">
    <property type="term" value="P:proteolysis"/>
    <property type="evidence" value="ECO:0000314"/>
    <property type="project" value="UniProtKB"/>
</dbReference>
<dbReference type="GO" id="GO:0032801">
    <property type="term" value="P:receptor catabolic process"/>
    <property type="evidence" value="ECO:0007669"/>
    <property type="project" value="Ensembl"/>
</dbReference>
<dbReference type="GO" id="GO:0050790">
    <property type="term" value="P:regulation of catalytic activity"/>
    <property type="evidence" value="ECO:0000314"/>
    <property type="project" value="UniProtKB"/>
</dbReference>
<dbReference type="GO" id="GO:0016241">
    <property type="term" value="P:regulation of macroautophagy"/>
    <property type="evidence" value="ECO:0000303"/>
    <property type="project" value="ParkinsonsUK-UCL"/>
</dbReference>
<dbReference type="GO" id="GO:0097264">
    <property type="term" value="P:self proteolysis"/>
    <property type="evidence" value="ECO:0000314"/>
    <property type="project" value="UniProtKB"/>
</dbReference>
<dbReference type="CDD" id="cd00214">
    <property type="entry name" value="Calpain_III"/>
    <property type="match status" value="1"/>
</dbReference>
<dbReference type="CDD" id="cd00044">
    <property type="entry name" value="CysPc"/>
    <property type="match status" value="1"/>
</dbReference>
<dbReference type="CDD" id="cd16198">
    <property type="entry name" value="EFh_PEF_CAPN1"/>
    <property type="match status" value="1"/>
</dbReference>
<dbReference type="FunFam" id="1.10.238.10:FF:000124">
    <property type="entry name" value="Calpain-1 catalytic subunit"/>
    <property type="match status" value="1"/>
</dbReference>
<dbReference type="FunFam" id="2.60.120.380:FF:000001">
    <property type="entry name" value="Calpain-1 catalytic subunit"/>
    <property type="match status" value="1"/>
</dbReference>
<dbReference type="FunFam" id="3.90.70.10:FF:000001">
    <property type="entry name" value="Calpain-1 catalytic subunit"/>
    <property type="match status" value="1"/>
</dbReference>
<dbReference type="Gene3D" id="2.60.120.380">
    <property type="match status" value="1"/>
</dbReference>
<dbReference type="Gene3D" id="3.90.70.10">
    <property type="entry name" value="Cysteine proteinases"/>
    <property type="match status" value="1"/>
</dbReference>
<dbReference type="Gene3D" id="1.10.238.10">
    <property type="entry name" value="EF-hand"/>
    <property type="match status" value="1"/>
</dbReference>
<dbReference type="InterPro" id="IPR033883">
    <property type="entry name" value="C2_III"/>
</dbReference>
<dbReference type="InterPro" id="IPR022684">
    <property type="entry name" value="Calpain_cysteine_protease"/>
</dbReference>
<dbReference type="InterPro" id="IPR022682">
    <property type="entry name" value="Calpain_domain_III"/>
</dbReference>
<dbReference type="InterPro" id="IPR022683">
    <property type="entry name" value="Calpain_III"/>
</dbReference>
<dbReference type="InterPro" id="IPR036213">
    <property type="entry name" value="Calpain_III_sf"/>
</dbReference>
<dbReference type="InterPro" id="IPR011992">
    <property type="entry name" value="EF-hand-dom_pair"/>
</dbReference>
<dbReference type="InterPro" id="IPR018247">
    <property type="entry name" value="EF_Hand_1_Ca_BS"/>
</dbReference>
<dbReference type="InterPro" id="IPR002048">
    <property type="entry name" value="EF_hand_dom"/>
</dbReference>
<dbReference type="InterPro" id="IPR038765">
    <property type="entry name" value="Papain-like_cys_pep_sf"/>
</dbReference>
<dbReference type="InterPro" id="IPR000169">
    <property type="entry name" value="Pept_cys_AS"/>
</dbReference>
<dbReference type="InterPro" id="IPR001300">
    <property type="entry name" value="Peptidase_C2_calpain_cat"/>
</dbReference>
<dbReference type="PANTHER" id="PTHR10183">
    <property type="entry name" value="CALPAIN"/>
    <property type="match status" value="1"/>
</dbReference>
<dbReference type="PANTHER" id="PTHR10183:SF284">
    <property type="entry name" value="CALPAIN-1 CATALYTIC SUBUNIT"/>
    <property type="match status" value="1"/>
</dbReference>
<dbReference type="Pfam" id="PF01067">
    <property type="entry name" value="Calpain_III"/>
    <property type="match status" value="1"/>
</dbReference>
<dbReference type="Pfam" id="PF13833">
    <property type="entry name" value="EF-hand_8"/>
    <property type="match status" value="1"/>
</dbReference>
<dbReference type="Pfam" id="PF00648">
    <property type="entry name" value="Peptidase_C2"/>
    <property type="match status" value="1"/>
</dbReference>
<dbReference type="PRINTS" id="PR00704">
    <property type="entry name" value="CALPAIN"/>
</dbReference>
<dbReference type="SMART" id="SM00720">
    <property type="entry name" value="calpain_III"/>
    <property type="match status" value="1"/>
</dbReference>
<dbReference type="SMART" id="SM00230">
    <property type="entry name" value="CysPc"/>
    <property type="match status" value="1"/>
</dbReference>
<dbReference type="SUPFAM" id="SSF49758">
    <property type="entry name" value="Calpain large subunit, middle domain (domain III)"/>
    <property type="match status" value="1"/>
</dbReference>
<dbReference type="SUPFAM" id="SSF54001">
    <property type="entry name" value="Cysteine proteinases"/>
    <property type="match status" value="1"/>
</dbReference>
<dbReference type="SUPFAM" id="SSF47473">
    <property type="entry name" value="EF-hand"/>
    <property type="match status" value="1"/>
</dbReference>
<dbReference type="PROSITE" id="PS50203">
    <property type="entry name" value="CALPAIN_CAT"/>
    <property type="match status" value="1"/>
</dbReference>
<dbReference type="PROSITE" id="PS00018">
    <property type="entry name" value="EF_HAND_1"/>
    <property type="match status" value="2"/>
</dbReference>
<dbReference type="PROSITE" id="PS50222">
    <property type="entry name" value="EF_HAND_2"/>
    <property type="match status" value="4"/>
</dbReference>
<dbReference type="PROSITE" id="PS00139">
    <property type="entry name" value="THIOL_PROTEASE_CYS"/>
    <property type="match status" value="1"/>
</dbReference>
<reference key="1">
    <citation type="journal article" date="1986" name="FEBS Lett.">
        <title>Complete amino acid sequence of the large subunit of the low-Ca2+-requiring form of human Ca2+-activated neutral protease (muCANP) deduced from its cDNA sequence.</title>
        <authorList>
            <person name="Aoki K."/>
            <person name="Imajoh S."/>
            <person name="Ohno S."/>
            <person name="Emori Y."/>
            <person name="Koike M."/>
            <person name="Kosaki G."/>
            <person name="Suzuki K."/>
        </authorList>
    </citation>
    <scope>NUCLEOTIDE SEQUENCE [MRNA]</scope>
    <scope>TISSUE SPECIFICITY</scope>
</reference>
<reference key="2">
    <citation type="journal article" date="1990" name="Biol. Chem. Hoppe-Seyler">
        <title>A novel member of the calcium-dependent cysteine protease family.</title>
        <authorList>
            <person name="Sorimachi H."/>
            <person name="Ohmi S."/>
            <person name="Emori Y."/>
            <person name="Kawasaki H."/>
            <person name="Saido T.C."/>
            <person name="Ohno S."/>
            <person name="Minami Y."/>
            <person name="Suzuki K."/>
        </authorList>
    </citation>
    <scope>NUCLEOTIDE SEQUENCE [MRNA]</scope>
    <scope>FUNCTION</scope>
    <scope>TISSUE SPECIFICITY</scope>
</reference>
<reference key="3">
    <citation type="submission" date="2004-02" db="EMBL/GenBank/DDBJ databases">
        <title>Identification of a human cell proliferation inducing gene.</title>
        <authorList>
            <person name="Kim J.W."/>
        </authorList>
    </citation>
    <scope>NUCLEOTIDE SEQUENCE [LARGE SCALE MRNA]</scope>
</reference>
<reference key="4">
    <citation type="submission" date="2004-10" db="EMBL/GenBank/DDBJ databases">
        <authorList>
            <consortium name="NIEHS SNPs program"/>
        </authorList>
    </citation>
    <scope>NUCLEOTIDE SEQUENCE [GENOMIC DNA]</scope>
    <scope>VARIANTS ALA-103; PRO-433; ARG-492 AND ILE-676</scope>
</reference>
<reference key="5">
    <citation type="journal article" date="2004" name="Genome Res.">
        <title>The status, quality, and expansion of the NIH full-length cDNA project: the Mammalian Gene Collection (MGC).</title>
        <authorList>
            <consortium name="The MGC Project Team"/>
        </authorList>
    </citation>
    <scope>NUCLEOTIDE SEQUENCE [LARGE SCALE MRNA]</scope>
    <scope>VARIANT PRO-433</scope>
    <source>
        <tissue>Kidney</tissue>
        <tissue>Pancreas</tissue>
        <tissue>Placenta</tissue>
    </source>
</reference>
<reference key="6">
    <citation type="journal article" date="1996" name="Biochem. Biophys. Res. Commun.">
        <title>Modulation of the calpain autoproteolysis by calpastatin and phospholipids.</title>
        <authorList>
            <person name="Melloni E."/>
            <person name="Michetti M."/>
            <person name="Salamino F."/>
            <person name="Minafra R."/>
            <person name="Pontremoli S."/>
        </authorList>
    </citation>
    <scope>ACTIVITY REGULATION</scope>
    <scope>AUTOPROTEOLYTIC PROCESSING</scope>
    <scope>COFACTOR</scope>
    <scope>TISSUE SPECIFICITY</scope>
</reference>
<reference key="7">
    <citation type="journal article" date="1996" name="FEBS Lett.">
        <title>Autolysis of human erythrocyte calpain produces two active enzyme forms with different cell localization.</title>
        <authorList>
            <person name="Michetti M."/>
            <person name="Salamino F."/>
            <person name="Tedesco I."/>
            <person name="Averna M."/>
            <person name="Minafra R."/>
            <person name="Melloni E."/>
            <person name="Pontremoli S."/>
        </authorList>
    </citation>
    <scope>AUTOPROTEOLYTIC PROCESSING</scope>
    <scope>SUBCELLULAR LOCATION</scope>
    <scope>TISSUE SPECIFICITY</scope>
</reference>
<reference key="8">
    <citation type="journal article" date="1997" name="Biochem. J.">
        <title>Calcium-binding properties of human erythrocyte calpain.</title>
        <authorList>
            <person name="Michetti M."/>
            <person name="Salamino F."/>
            <person name="Minafra R."/>
            <person name="Melloni E."/>
            <person name="Pontremoli S."/>
        </authorList>
    </citation>
    <scope>ACTIVITY REGULATION</scope>
    <scope>COFACTOR</scope>
    <scope>CALCIUM-BINDING DATA</scope>
    <scope>TISSUE SPECIFICITY</scope>
</reference>
<reference key="9">
    <citation type="journal article" date="2009" name="Anal. Chem.">
        <title>Lys-N and trypsin cover complementary parts of the phosphoproteome in a refined SCX-based approach.</title>
        <authorList>
            <person name="Gauci S."/>
            <person name="Helbig A.O."/>
            <person name="Slijper M."/>
            <person name="Krijgsveld J."/>
            <person name="Heck A.J."/>
            <person name="Mohammed S."/>
        </authorList>
    </citation>
    <scope>ACETYLATION [LARGE SCALE ANALYSIS] AT SER-2</scope>
    <scope>CLEAVAGE OF INITIATOR METHIONINE [LARGE SCALE ANALYSIS]</scope>
    <scope>IDENTIFICATION BY MASS SPECTROMETRY [LARGE SCALE ANALYSIS]</scope>
</reference>
<reference key="10">
    <citation type="journal article" date="2009" name="J. Biol. Chem.">
        <title>Calpain-1 cleaves and activates caspase-7.</title>
        <authorList>
            <person name="Gafni J."/>
            <person name="Cong X."/>
            <person name="Chen S.F."/>
            <person name="Gibson B.W."/>
            <person name="Ellerby L.M."/>
        </authorList>
    </citation>
    <scope>FUNCTION</scope>
    <scope>CATALYTIC ACTIVITY</scope>
</reference>
<reference key="11">
    <citation type="journal article" date="2011" name="BMC Syst. Biol.">
        <title>Initial characterization of the human central proteome.</title>
        <authorList>
            <person name="Burkard T.R."/>
            <person name="Planyavsky M."/>
            <person name="Kaupe I."/>
            <person name="Breitwieser F.P."/>
            <person name="Buerckstuemmer T."/>
            <person name="Bennett K.L."/>
            <person name="Superti-Furga G."/>
            <person name="Colinge J."/>
        </authorList>
    </citation>
    <scope>IDENTIFICATION BY MASS SPECTROMETRY [LARGE SCALE ANALYSIS]</scope>
</reference>
<reference key="12">
    <citation type="journal article" date="2011" name="J. Biol. Chem.">
        <title>Deimination of human filaggrin-2 promotes its proteolysis by calpain 1.</title>
        <authorList>
            <person name="Hsu C.Y."/>
            <person name="Henry J."/>
            <person name="Raymond A.A."/>
            <person name="Mechin M.C."/>
            <person name="Pendaries V."/>
            <person name="Nassar D."/>
            <person name="Hansmann B."/>
            <person name="Balica S."/>
            <person name="Burlet-Schiltz O."/>
            <person name="Schmitt A.M."/>
            <person name="Takahara H."/>
            <person name="Paul C."/>
            <person name="Serre G."/>
            <person name="Simon M."/>
        </authorList>
    </citation>
    <scope>CATALYTIC ACTIVITY</scope>
    <scope>FUNCTION</scope>
    <scope>SUBCELLULAR LOCATION</scope>
</reference>
<reference key="13">
    <citation type="journal article" date="2012" name="Mol. Cell. Proteomics">
        <title>Comparative large-scale characterisation of plant vs. mammal proteins reveals similar and idiosyncratic N-alpha acetylation features.</title>
        <authorList>
            <person name="Bienvenut W.V."/>
            <person name="Sumpton D."/>
            <person name="Martinez A."/>
            <person name="Lilla S."/>
            <person name="Espagne C."/>
            <person name="Meinnel T."/>
            <person name="Giglione C."/>
        </authorList>
    </citation>
    <scope>ACETYLATION [LARGE SCALE ANALYSIS] AT SER-2</scope>
    <scope>CLEAVAGE OF INITIATOR METHIONINE [LARGE SCALE ANALYSIS]</scope>
    <scope>IDENTIFICATION BY MASS SPECTROMETRY [LARGE SCALE ANALYSIS]</scope>
</reference>
<reference key="14">
    <citation type="journal article" date="2012" name="Proc. Natl. Acad. Sci. U.S.A.">
        <title>N-terminal acetylome analyses and functional insights of the N-terminal acetyltransferase NatB.</title>
        <authorList>
            <person name="Van Damme P."/>
            <person name="Lasa M."/>
            <person name="Polevoda B."/>
            <person name="Gazquez C."/>
            <person name="Elosegui-Artola A."/>
            <person name="Kim D.S."/>
            <person name="De Juan-Pardo E."/>
            <person name="Demeyer K."/>
            <person name="Hole K."/>
            <person name="Larrea E."/>
            <person name="Timmerman E."/>
            <person name="Prieto J."/>
            <person name="Arnesen T."/>
            <person name="Sherman F."/>
            <person name="Gevaert K."/>
            <person name="Aldabe R."/>
        </authorList>
    </citation>
    <scope>ACETYLATION [LARGE SCALE ANALYSIS] AT SER-2</scope>
    <scope>CLEAVAGE OF INITIATOR METHIONINE [LARGE SCALE ANALYSIS]</scope>
    <scope>IDENTIFICATION BY MASS SPECTROMETRY [LARGE SCALE ANALYSIS]</scope>
</reference>
<reference key="15">
    <citation type="journal article" date="2013" name="J. Mol. Biol.">
        <title>PLEIAD/SIMC1/C5orf25, a novel autolysis regulator for a skeletal-muscle-specific calpain, CAPN3, scaffolds a CAPN3 substrate, CTBP1.</title>
        <authorList>
            <person name="Ono Y."/>
            <person name="Iemura S."/>
            <person name="Novak S.M."/>
            <person name="Doi N."/>
            <person name="Kitamura F."/>
            <person name="Natsume T."/>
            <person name="Gregorio C.C."/>
            <person name="Sorimachi H."/>
        </authorList>
    </citation>
    <scope>FUNCTION</scope>
</reference>
<reference key="16">
    <citation type="journal article" date="2013" name="J. Proteome Res.">
        <title>Toward a comprehensive characterization of a human cancer cell phosphoproteome.</title>
        <authorList>
            <person name="Zhou H."/>
            <person name="Di Palma S."/>
            <person name="Preisinger C."/>
            <person name="Peng M."/>
            <person name="Polat A.N."/>
            <person name="Heck A.J."/>
            <person name="Mohammed S."/>
        </authorList>
    </citation>
    <scope>PHOSPHORYLATION [LARGE SCALE ANALYSIS] AT THR-354</scope>
    <scope>IDENTIFICATION BY MASS SPECTROMETRY [LARGE SCALE ANALYSIS]</scope>
    <source>
        <tissue>Erythroleukemia</tissue>
    </source>
</reference>
<reference key="17">
    <citation type="journal article" date="2014" name="J. Proteomics">
        <title>An enzyme assisted RP-RPLC approach for in-depth analysis of human liver phosphoproteome.</title>
        <authorList>
            <person name="Bian Y."/>
            <person name="Song C."/>
            <person name="Cheng K."/>
            <person name="Dong M."/>
            <person name="Wang F."/>
            <person name="Huang J."/>
            <person name="Sun D."/>
            <person name="Wang L."/>
            <person name="Ye M."/>
            <person name="Zou H."/>
        </authorList>
    </citation>
    <scope>IDENTIFICATION BY MASS SPECTROMETRY [LARGE SCALE ANALYSIS]</scope>
    <source>
        <tissue>Liver</tissue>
    </source>
</reference>
<reference key="18">
    <citation type="journal article" date="2016" name="Am. J. Hum. Genet.">
        <title>Mutations in CAPN1 cause autosomal-recessive hereditary spastic paraplegia.</title>
        <authorList>
            <person name="Gan-Or Z."/>
            <person name="Bouslam N."/>
            <person name="Birouk N."/>
            <person name="Lissouba A."/>
            <person name="Chambers D.B."/>
            <person name="Veriepe J."/>
            <person name="Androschuck A."/>
            <person name="Laurent S.B."/>
            <person name="Rochefort D."/>
            <person name="Spiegelman D."/>
            <person name="Dionne-Laporte A."/>
            <person name="Szuto A."/>
            <person name="Liao M."/>
            <person name="Figlewicz D.A."/>
            <person name="Bouhouche A."/>
            <person name="Benomar A."/>
            <person name="Yahyaoui M."/>
            <person name="Ouazzani R."/>
            <person name="Yoon G."/>
            <person name="Dupre N."/>
            <person name="Suchowersky O."/>
            <person name="Bolduc F.V."/>
            <person name="Parker J.A."/>
            <person name="Dion P.A."/>
            <person name="Drapeau P."/>
            <person name="Rouleau G.A."/>
            <person name="Bencheikh B.O."/>
        </authorList>
    </citation>
    <scope>INVOLVEMENT IN SPG76</scope>
    <scope>VARIANT SPG76 PRO-295</scope>
</reference>
<reference key="19">
    <citation type="journal article" date="2006" name="Biochemistry">
        <title>Molecular mode of action of a covalently inhibiting peptidomimetic on the human calpain protease core.</title>
        <authorList>
            <person name="Li Q."/>
            <person name="Hanzlik R.P."/>
            <person name="Weaver R.F."/>
            <person name="Schonbrunn E."/>
        </authorList>
    </citation>
    <scope>X-RAY CRYSTALLOGRAPHY (2.0 ANGSTROMS) OF 33-353 OF MUTANT ALA-213</scope>
    <scope>CATALYTIC ACTIVITY</scope>
    <scope>CALCIUM-BINDING REGIONS</scope>
</reference>
<comment type="function">
    <text evidence="7 8 9 10">Calcium-regulated non-lysosomal thiol-protease which catalyzes limited proteolysis of substrates involved in cytoskeletal remodeling and signal transduction (PubMed:19617626, PubMed:21531719, PubMed:2400579). Proteolytically cleaves CTBP1 at 'Asn-375', 'Gly-387' and 'His-409' (PubMed:23707407). Cleaves and activates caspase-7 (CASP7) (PubMed:19617626).</text>
</comment>
<comment type="catalytic activity">
    <reaction evidence="6 7 8">
        <text>Broad endopeptidase specificity.</text>
        <dbReference type="EC" id="3.4.22.52"/>
    </reaction>
</comment>
<comment type="cofactor">
    <cofactor evidence="14 15">
        <name>Ca(2+)</name>
        <dbReference type="ChEBI" id="CHEBI:29108"/>
    </cofactor>
    <text evidence="15">Binds 4 Ca(2+) ions.</text>
</comment>
<comment type="activity regulation">
    <text evidence="14 15">Activated by micromolar concentrations of calcium and inhibited by calpastatin.</text>
</comment>
<comment type="subunit">
    <text evidence="2">Forms a heterodimer with a small (regulatory) subunit CAPNS1.</text>
</comment>
<comment type="interaction">
    <interactant intactId="EBI-1542113">
        <id>P07384</id>
    </interactant>
    <interactant intactId="EBI-77613">
        <id>P05067</id>
        <label>APP</label>
    </interactant>
    <organismsDiffer>false</organismsDiffer>
    <experiments>3</experiments>
</comment>
<comment type="interaction">
    <interactant intactId="EBI-1542113">
        <id>P07384</id>
    </interactant>
    <interactant intactId="EBI-700771">
        <id>Q92934</id>
        <label>BAD</label>
    </interactant>
    <organismsDiffer>false</organismsDiffer>
    <experiments>3</experiments>
</comment>
<comment type="interaction">
    <interactant intactId="EBI-1542113">
        <id>P07384</id>
    </interactant>
    <interactant intactId="EBI-349854">
        <id>P13569</id>
        <label>CFTR</label>
    </interactant>
    <organismsDiffer>false</organismsDiffer>
    <experiments>7</experiments>
</comment>
<comment type="interaction">
    <interactant intactId="EBI-1542113">
        <id>P07384</id>
    </interactant>
    <interactant intactId="EBI-23373346">
        <id>P30085-3</id>
        <label>CMPK1</label>
    </interactant>
    <organismsDiffer>false</organismsDiffer>
    <experiments>3</experiments>
</comment>
<comment type="interaction">
    <interactant intactId="EBI-1542113">
        <id>P07384</id>
    </interactant>
    <interactant intactId="EBI-1056902">
        <id>P15311</id>
        <label>EZR</label>
    </interactant>
    <organismsDiffer>false</organismsDiffer>
    <experiments>2</experiments>
</comment>
<comment type="interaction">
    <interactant intactId="EBI-1542113">
        <id>P07384</id>
    </interactant>
    <interactant intactId="EBI-715255">
        <id>P27816</id>
        <label>MAP4</label>
    </interactant>
    <organismsDiffer>false</organismsDiffer>
    <experiments>2</experiments>
</comment>
<comment type="interaction">
    <interactant intactId="EBI-1542113">
        <id>P07384</id>
    </interactant>
    <interactant intactId="EBI-748974">
        <id>Q96CV9</id>
        <label>OPTN</label>
    </interactant>
    <organismsDiffer>false</organismsDiffer>
    <experiments>3</experiments>
</comment>
<comment type="interaction">
    <interactant intactId="EBI-1542113">
        <id>P07384</id>
    </interactant>
    <interactant intactId="EBI-968788">
        <id>P18031</id>
        <label>PTPN1</label>
    </interactant>
    <organismsDiffer>false</organismsDiffer>
    <experiments>4</experiments>
</comment>
<comment type="interaction">
    <interactant intactId="EBI-1542113">
        <id>P07384</id>
    </interactant>
    <interactant intactId="EBI-518675">
        <id>P40763</id>
        <label>STAT3</label>
    </interactant>
    <organismsDiffer>false</organismsDiffer>
    <experiments>2</experiments>
</comment>
<comment type="subcellular location">
    <subcellularLocation>
        <location evidence="8 13">Cytoplasm</location>
    </subcellularLocation>
    <subcellularLocation>
        <location evidence="13">Cell membrane</location>
    </subcellularLocation>
    <text evidence="8">Translocates to the plasma membrane upon Ca(2+) binding. In granular keratinocytes and in lower corneocytes, colocalizes with FLG and FLG2 (PubMed:21531719).</text>
</comment>
<comment type="tissue specificity">
    <text evidence="10 12 13 14 15">Ubiquitous.</text>
</comment>
<comment type="PTM">
    <text evidence="13 14">Undergoes calcium-induced successive autoproteolytic cleavages that generate a membrane-bound 78 kDa active form and an intracellular 75 kDa active form. Calpastatin reduces with high efficiency the transition from 78 kDa to 75 kDa calpain forms.</text>
</comment>
<comment type="disease" evidence="11">
    <disease id="DI-04733">
        <name>Spastic paraplegia 76, autosomal recessive</name>
        <acronym>SPG76</acronym>
        <description>A form of spastic paraplegia, a neurodegenerative disorder characterized by a slow, gradual, progressive weakness and spasticity of the lower limbs. Rate of progression and the severity of symptoms are quite variable. Initial symptoms may include difficulty with balance, weakness and stiffness in the legs, muscle spasms, and dragging the toes when walking. In some forms of the disorder, bladder symptoms (such as incontinence) may appear, or the weakness and stiffness may spread to other parts of the body.</description>
        <dbReference type="MIM" id="616907"/>
    </disease>
    <text>The disease is caused by variants affecting the gene represented in this entry.</text>
</comment>
<comment type="similarity">
    <text evidence="20">Belongs to the peptidase C2 family.</text>
</comment>
<comment type="online information" name="Calpains homepage">
    <link uri="https://cales.arizona.edu/calpains/"/>
</comment>
<sequence length="714" mass="81890">MSEEIITPVYCTGVSAQVQKQRARELGLGRHENAIKYLGQDYEQLRVRCLQSGTLFRDEAFPPVPQSLGYKDLGPNSSKTYGIKWKRPTELLSNPQFIVDGATRTDICQGALGDCWLLAAIASLTLNDTLLHRVVPHGQSFQNGYAGIFHFQLWQFGEWVDVVVDDLLPIKDGKLVFVHSAEGNEFWSALLEKAYAKVNGSYEALSGGSTSEGFEDFTGGVTEWYELRKAPSDLYQIILKALERGSLLGCSIDISSVLDMEAITFKKLVKGHAYSVTGAKQVNYRGQVVSLIRMRNPWGEVEWTGAWSDSSSEWNNVDPYERDQLRVKMEDGEFWMSFRDFMREFTRLEICNLTPDALKSRTIRKWNTTLYEGTWRRGSTAGGCRNYPATFWVNPQFKIRLDETDDPDDYGDRESGCSFVLALMQKHRRRERRFGRDMETIGFAVYEVPPELVGQPAVHLKRDFFLANASRARSEQFINLREVSTRFRLPPGEYVVVPSTFEPNKEGDFVLRFFSEKSAGTVELDDQIQANLPDEQVLSEEEIDENFKALFRQLAGEDMEISVKELRTILNRIISKHKDLRTKGFSLESCRSMVNLMDRDGNGKLGLVEFNILWNRIRNYLSIFRKFDLDKSGSMSAYEMRMAIESAGFKLNKKLYELIITRYSEPDLAVDFDNFVCCLVRLETMFRFFKTLDTDLDGVVTFDLFKWLQLTMFA</sequence>
<evidence type="ECO:0000250" key="1"/>
<evidence type="ECO:0000250" key="2">
    <source>
        <dbReference type="UniProtKB" id="P97571"/>
    </source>
</evidence>
<evidence type="ECO:0000255" key="3">
    <source>
        <dbReference type="PROSITE-ProRule" id="PRU00239"/>
    </source>
</evidence>
<evidence type="ECO:0000255" key="4">
    <source>
        <dbReference type="PROSITE-ProRule" id="PRU00448"/>
    </source>
</evidence>
<evidence type="ECO:0000269" key="5">
    <source>
    </source>
</evidence>
<evidence type="ECO:0000269" key="6">
    <source>
    </source>
</evidence>
<evidence type="ECO:0000269" key="7">
    <source>
    </source>
</evidence>
<evidence type="ECO:0000269" key="8">
    <source>
    </source>
</evidence>
<evidence type="ECO:0000269" key="9">
    <source>
    </source>
</evidence>
<evidence type="ECO:0000269" key="10">
    <source>
    </source>
</evidence>
<evidence type="ECO:0000269" key="11">
    <source>
    </source>
</evidence>
<evidence type="ECO:0000269" key="12">
    <source>
    </source>
</evidence>
<evidence type="ECO:0000269" key="13">
    <source>
    </source>
</evidence>
<evidence type="ECO:0000269" key="14">
    <source>
    </source>
</evidence>
<evidence type="ECO:0000269" key="15">
    <source>
    </source>
</evidence>
<evidence type="ECO:0000269" key="16">
    <source ref="4"/>
</evidence>
<evidence type="ECO:0000303" key="17">
    <source>
    </source>
</evidence>
<evidence type="ECO:0000303" key="18">
    <source>
    </source>
</evidence>
<evidence type="ECO:0000303" key="19">
    <source ref="3"/>
</evidence>
<evidence type="ECO:0000305" key="20"/>
<evidence type="ECO:0000312" key="21">
    <source>
        <dbReference type="EMBL" id="AAT52221.1"/>
    </source>
</evidence>
<evidence type="ECO:0000312" key="22">
    <source>
        <dbReference type="HGNC" id="HGNC:1476"/>
    </source>
</evidence>
<evidence type="ECO:0007744" key="23">
    <source>
    </source>
</evidence>
<evidence type="ECO:0007744" key="24">
    <source>
    </source>
</evidence>
<evidence type="ECO:0007744" key="25">
    <source>
    </source>
</evidence>
<evidence type="ECO:0007744" key="26">
    <source>
    </source>
</evidence>
<evidence type="ECO:0007829" key="27">
    <source>
        <dbReference type="PDB" id="1ZCM"/>
    </source>
</evidence>
<evidence type="ECO:0007829" key="28">
    <source>
        <dbReference type="PDB" id="7W7O"/>
    </source>
</evidence>
<accession>P07384</accession>
<accession>Q2TTR0</accession>
<accession>Q6DHV4</accession>
<protein>
    <recommendedName>
        <fullName evidence="20">Calpain-1 catalytic subunit</fullName>
        <ecNumber evidence="7 8">3.4.22.52</ecNumber>
    </recommendedName>
    <alternativeName>
        <fullName evidence="18">Calcium-activated neutral proteinase 1</fullName>
        <shortName evidence="18">CANP 1</shortName>
    </alternativeName>
    <alternativeName>
        <fullName evidence="17">Calpain mu-type</fullName>
    </alternativeName>
    <alternativeName>
        <fullName evidence="18">Calpain-1 large subunit</fullName>
    </alternativeName>
    <alternativeName>
        <fullName evidence="19">Cell proliferation-inducing gene 30 protein</fullName>
    </alternativeName>
    <alternativeName>
        <fullName evidence="18">Micromolar-calpain</fullName>
        <shortName evidence="18">muCANP</shortName>
    </alternativeName>
</protein>
<name>CAN1_HUMAN</name>
<proteinExistence type="evidence at protein level"/>
<feature type="initiator methionine" description="Removed" evidence="23 24 25">
    <location>
        <position position="1"/>
    </location>
</feature>
<feature type="chain" id="PRO_0000207694" description="Calpain-1 catalytic subunit">
    <location>
        <begin position="2"/>
        <end position="714"/>
    </location>
</feature>
<feature type="domain" description="Calpain catalytic" evidence="3">
    <location>
        <begin position="55"/>
        <end position="354"/>
    </location>
</feature>
<feature type="domain" description="EF-hand 1" evidence="4">
    <location>
        <begin position="541"/>
        <end position="576"/>
    </location>
</feature>
<feature type="domain" description="EF-hand 2" evidence="4">
    <location>
        <begin position="585"/>
        <end position="618"/>
    </location>
</feature>
<feature type="domain" description="EF-hand 3" evidence="4">
    <location>
        <begin position="615"/>
        <end position="650"/>
    </location>
</feature>
<feature type="domain" description="EF-hand 4" evidence="4">
    <location>
        <begin position="680"/>
        <end position="714"/>
    </location>
</feature>
<feature type="region of interest" description="Domain III">
    <location>
        <begin position="355"/>
        <end position="526"/>
    </location>
</feature>
<feature type="region of interest" description="Linker">
    <location>
        <begin position="527"/>
        <end position="542"/>
    </location>
</feature>
<feature type="region of interest" description="Domain IV">
    <location>
        <begin position="543"/>
        <end position="713"/>
    </location>
</feature>
<feature type="active site" evidence="1">
    <location>
        <position position="115"/>
    </location>
</feature>
<feature type="active site" evidence="1">
    <location>
        <position position="272"/>
    </location>
</feature>
<feature type="active site" evidence="1">
    <location>
        <position position="296"/>
    </location>
</feature>
<feature type="binding site" evidence="20">
    <location>
        <position position="109"/>
    </location>
    <ligand>
        <name>Ca(2+)</name>
        <dbReference type="ChEBI" id="CHEBI:29108"/>
        <label>1</label>
    </ligand>
</feature>
<feature type="binding site" evidence="20">
    <location>
        <position position="114"/>
    </location>
    <ligand>
        <name>Ca(2+)</name>
        <dbReference type="ChEBI" id="CHEBI:29108"/>
        <label>1</label>
    </ligand>
</feature>
<feature type="binding site" evidence="20">
    <location>
        <position position="316"/>
    </location>
    <ligand>
        <name>Ca(2+)</name>
        <dbReference type="ChEBI" id="CHEBI:29108"/>
        <label>2</label>
    </ligand>
</feature>
<feature type="binding site" evidence="20">
    <location>
        <position position="318"/>
    </location>
    <ligand>
        <name>Ca(2+)</name>
        <dbReference type="ChEBI" id="CHEBI:29108"/>
        <label>2</label>
    </ligand>
</feature>
<feature type="binding site" evidence="20">
    <location>
        <position position="323"/>
    </location>
    <ligand>
        <name>Ca(2+)</name>
        <dbReference type="ChEBI" id="CHEBI:29108"/>
        <label>2</label>
    </ligand>
</feature>
<feature type="binding site" evidence="4">
    <location>
        <position position="598"/>
    </location>
    <ligand>
        <name>Ca(2+)</name>
        <dbReference type="ChEBI" id="CHEBI:29108"/>
        <label>3</label>
    </ligand>
</feature>
<feature type="binding site" evidence="4">
    <location>
        <position position="600"/>
    </location>
    <ligand>
        <name>Ca(2+)</name>
        <dbReference type="ChEBI" id="CHEBI:29108"/>
        <label>3</label>
    </ligand>
</feature>
<feature type="binding site" evidence="4">
    <location>
        <position position="602"/>
    </location>
    <ligand>
        <name>Ca(2+)</name>
        <dbReference type="ChEBI" id="CHEBI:29108"/>
        <label>3</label>
    </ligand>
</feature>
<feature type="binding site" evidence="4">
    <location>
        <position position="604"/>
    </location>
    <ligand>
        <name>Ca(2+)</name>
        <dbReference type="ChEBI" id="CHEBI:29108"/>
        <label>3</label>
    </ligand>
</feature>
<feature type="binding site" evidence="4">
    <location>
        <position position="609"/>
    </location>
    <ligand>
        <name>Ca(2+)</name>
        <dbReference type="ChEBI" id="CHEBI:29108"/>
        <label>3</label>
    </ligand>
</feature>
<feature type="binding site" evidence="4">
    <location>
        <position position="628"/>
    </location>
    <ligand>
        <name>Ca(2+)</name>
        <dbReference type="ChEBI" id="CHEBI:29108"/>
        <label>4</label>
    </ligand>
</feature>
<feature type="binding site" evidence="4">
    <location>
        <position position="630"/>
    </location>
    <ligand>
        <name>Ca(2+)</name>
        <dbReference type="ChEBI" id="CHEBI:29108"/>
        <label>4</label>
    </ligand>
</feature>
<feature type="binding site" evidence="4">
    <location>
        <position position="632"/>
    </location>
    <ligand>
        <name>Ca(2+)</name>
        <dbReference type="ChEBI" id="CHEBI:29108"/>
        <label>4</label>
    </ligand>
</feature>
<feature type="binding site" evidence="4">
    <location>
        <position position="634"/>
    </location>
    <ligand>
        <name>Ca(2+)</name>
        <dbReference type="ChEBI" id="CHEBI:29108"/>
        <label>4</label>
    </ligand>
</feature>
<feature type="binding site" evidence="4">
    <location>
        <position position="639"/>
    </location>
    <ligand>
        <name>Ca(2+)</name>
        <dbReference type="ChEBI" id="CHEBI:29108"/>
        <label>4</label>
    </ligand>
</feature>
<feature type="site" description="Cleavage; for 78 kDa form">
    <location>
        <begin position="15"/>
        <end position="16"/>
    </location>
</feature>
<feature type="site" description="Cleavage; for 75 kDa form">
    <location>
        <begin position="27"/>
        <end position="28"/>
    </location>
</feature>
<feature type="modified residue" description="N-acetylserine" evidence="23 24 25">
    <location>
        <position position="2"/>
    </location>
</feature>
<feature type="modified residue" description="Phosphothreonine" evidence="26">
    <location>
        <position position="354"/>
    </location>
</feature>
<feature type="sequence variant" id="VAR_021085" description="In dbSNP:rs17885718." evidence="16">
    <original>T</original>
    <variation>A</variation>
    <location>
        <position position="103"/>
    </location>
</feature>
<feature type="sequence variant" id="VAR_077899" description="In SPG76; dbSNP:rs756205995." evidence="11">
    <original>R</original>
    <variation>P</variation>
    <location>
        <position position="295"/>
    </location>
</feature>
<feature type="sequence variant" id="VAR_021086" description="In dbSNP:rs10895991." evidence="5 16">
    <original>R</original>
    <variation>P</variation>
    <location>
        <position position="433"/>
    </location>
</feature>
<feature type="sequence variant" id="VAR_021087" description="In dbSNP:rs17883283." evidence="16">
    <original>G</original>
    <variation>R</variation>
    <location>
        <position position="492"/>
    </location>
</feature>
<feature type="sequence variant" id="VAR_021088" description="In dbSNP:rs17884773." evidence="16">
    <original>V</original>
    <variation>I</variation>
    <location>
        <position position="676"/>
    </location>
</feature>
<feature type="sequence conflict" description="In Ref. 5; AAH08751." evidence="20" ref="5">
    <original>K</original>
    <variation>N</variation>
    <location>
        <position position="548"/>
    </location>
</feature>
<feature type="helix" evidence="28">
    <location>
        <begin position="37"/>
        <end position="39"/>
    </location>
</feature>
<feature type="helix" evidence="28">
    <location>
        <begin position="42"/>
        <end position="51"/>
    </location>
</feature>
<feature type="helix" evidence="28">
    <location>
        <begin position="65"/>
        <end position="68"/>
    </location>
</feature>
<feature type="helix" evidence="28">
    <location>
        <begin position="78"/>
        <end position="80"/>
    </location>
</feature>
<feature type="strand" evidence="28">
    <location>
        <begin position="84"/>
        <end position="86"/>
    </location>
</feature>
<feature type="helix" evidence="28">
    <location>
        <begin position="88"/>
        <end position="90"/>
    </location>
</feature>
<feature type="strand" evidence="27">
    <location>
        <begin position="99"/>
        <end position="102"/>
    </location>
</feature>
<feature type="helix" evidence="28">
    <location>
        <begin position="104"/>
        <end position="106"/>
    </location>
</feature>
<feature type="strand" evidence="28">
    <location>
        <begin position="111"/>
        <end position="113"/>
    </location>
</feature>
<feature type="helix" evidence="28">
    <location>
        <begin position="115"/>
        <end position="124"/>
    </location>
</feature>
<feature type="helix" evidence="28">
    <location>
        <begin position="128"/>
        <end position="134"/>
    </location>
</feature>
<feature type="strand" evidence="28">
    <location>
        <begin position="146"/>
        <end position="155"/>
    </location>
</feature>
<feature type="strand" evidence="28">
    <location>
        <begin position="158"/>
        <end position="166"/>
    </location>
</feature>
<feature type="strand" evidence="28">
    <location>
        <begin position="168"/>
        <end position="171"/>
    </location>
</feature>
<feature type="strand" evidence="28">
    <location>
        <begin position="174"/>
        <end position="177"/>
    </location>
</feature>
<feature type="helix" evidence="28">
    <location>
        <begin position="187"/>
        <end position="199"/>
    </location>
</feature>
<feature type="helix" evidence="28">
    <location>
        <begin position="203"/>
        <end position="205"/>
    </location>
</feature>
<feature type="helix" evidence="28">
    <location>
        <begin position="210"/>
        <end position="218"/>
    </location>
</feature>
<feature type="strand" evidence="28">
    <location>
        <begin position="221"/>
        <end position="226"/>
    </location>
</feature>
<feature type="helix" evidence="28">
    <location>
        <begin position="227"/>
        <end position="229"/>
    </location>
</feature>
<feature type="helix" evidence="28">
    <location>
        <begin position="234"/>
        <end position="244"/>
    </location>
</feature>
<feature type="strand" evidence="28">
    <location>
        <begin position="247"/>
        <end position="251"/>
    </location>
</feature>
<feature type="helix" evidence="28">
    <location>
        <begin position="257"/>
        <end position="259"/>
    </location>
</feature>
<feature type="strand" evidence="28">
    <location>
        <begin position="274"/>
        <end position="284"/>
    </location>
</feature>
<feature type="strand" evidence="28">
    <location>
        <begin position="287"/>
        <end position="295"/>
    </location>
</feature>
<feature type="helix" evidence="28">
    <location>
        <begin position="312"/>
        <end position="316"/>
    </location>
</feature>
<feature type="helix" evidence="28">
    <location>
        <begin position="319"/>
        <end position="325"/>
    </location>
</feature>
<feature type="strand" evidence="28">
    <location>
        <begin position="331"/>
        <end position="337"/>
    </location>
</feature>
<feature type="helix" evidence="28">
    <location>
        <begin position="338"/>
        <end position="344"/>
    </location>
</feature>
<feature type="strand" evidence="28">
    <location>
        <begin position="347"/>
        <end position="354"/>
    </location>
</feature>